<gene>
    <name evidence="1" type="primary">psbT</name>
</gene>
<reference key="1">
    <citation type="journal article" date="2006" name="Mol. Biol. Evol.">
        <title>The complete chloroplast genome sequence of Pelargonium x hortorum: organization and evolution of the largest and most highly rearranged chloroplast genome of land plants.</title>
        <authorList>
            <person name="Chumley T.W."/>
            <person name="Palmer J.D."/>
            <person name="Mower J.P."/>
            <person name="Fourcade H.M."/>
            <person name="Calie P.J."/>
            <person name="Boore J.L."/>
            <person name="Jansen R.K."/>
        </authorList>
    </citation>
    <scope>NUCLEOTIDE SEQUENCE [LARGE SCALE GENOMIC DNA]</scope>
    <source>
        <strain>cv. Ringo White</strain>
    </source>
</reference>
<geneLocation type="chloroplast"/>
<organism>
    <name type="scientific">Pelargonium hortorum</name>
    <name type="common">Common geranium</name>
    <name type="synonym">Pelargonium inquinans x Pelargonium zonale</name>
    <dbReference type="NCBI Taxonomy" id="4031"/>
    <lineage>
        <taxon>Eukaryota</taxon>
        <taxon>Viridiplantae</taxon>
        <taxon>Streptophyta</taxon>
        <taxon>Embryophyta</taxon>
        <taxon>Tracheophyta</taxon>
        <taxon>Spermatophyta</taxon>
        <taxon>Magnoliopsida</taxon>
        <taxon>eudicotyledons</taxon>
        <taxon>Gunneridae</taxon>
        <taxon>Pentapetalae</taxon>
        <taxon>rosids</taxon>
        <taxon>malvids</taxon>
        <taxon>Geraniales</taxon>
        <taxon>Geraniaceae</taxon>
        <taxon>Pelargonium</taxon>
    </lineage>
</organism>
<keyword id="KW-0150">Chloroplast</keyword>
<keyword id="KW-0472">Membrane</keyword>
<keyword id="KW-0602">Photosynthesis</keyword>
<keyword id="KW-0604">Photosystem II</keyword>
<keyword id="KW-0934">Plastid</keyword>
<keyword id="KW-0793">Thylakoid</keyword>
<keyword id="KW-0812">Transmembrane</keyword>
<keyword id="KW-1133">Transmembrane helix</keyword>
<name>PSBT_PELHO</name>
<accession>Q06FP1</accession>
<evidence type="ECO:0000255" key="1">
    <source>
        <dbReference type="HAMAP-Rule" id="MF_00808"/>
    </source>
</evidence>
<dbReference type="EMBL" id="DQ897681">
    <property type="protein sequence ID" value="ABI17332.1"/>
    <property type="molecule type" value="Genomic_DNA"/>
</dbReference>
<dbReference type="EMBL" id="DQ897681">
    <property type="protein sequence ID" value="ABI17308.1"/>
    <property type="molecule type" value="Genomic_DNA"/>
</dbReference>
<dbReference type="RefSeq" id="YP_784116.1">
    <property type="nucleotide sequence ID" value="NC_008454.1"/>
</dbReference>
<dbReference type="RefSeq" id="YP_784140.1">
    <property type="nucleotide sequence ID" value="NC_008454.1"/>
</dbReference>
<dbReference type="SMR" id="Q06FP1"/>
<dbReference type="GeneID" id="4362790"/>
<dbReference type="GeneID" id="4362869"/>
<dbReference type="GO" id="GO:0009535">
    <property type="term" value="C:chloroplast thylakoid membrane"/>
    <property type="evidence" value="ECO:0007669"/>
    <property type="project" value="UniProtKB-SubCell"/>
</dbReference>
<dbReference type="GO" id="GO:0009539">
    <property type="term" value="C:photosystem II reaction center"/>
    <property type="evidence" value="ECO:0007669"/>
    <property type="project" value="InterPro"/>
</dbReference>
<dbReference type="GO" id="GO:0015979">
    <property type="term" value="P:photosynthesis"/>
    <property type="evidence" value="ECO:0007669"/>
    <property type="project" value="UniProtKB-UniRule"/>
</dbReference>
<dbReference type="HAMAP" id="MF_00808">
    <property type="entry name" value="PSII_PsbT"/>
    <property type="match status" value="1"/>
</dbReference>
<dbReference type="InterPro" id="IPR001743">
    <property type="entry name" value="PSII_PsbT"/>
</dbReference>
<dbReference type="InterPro" id="IPR037268">
    <property type="entry name" value="PSII_PsbT_sf"/>
</dbReference>
<dbReference type="PANTHER" id="PTHR36411">
    <property type="match status" value="1"/>
</dbReference>
<dbReference type="PANTHER" id="PTHR36411:SF2">
    <property type="entry name" value="PHOTOSYSTEM II REACTION CENTER PROTEIN T"/>
    <property type="match status" value="1"/>
</dbReference>
<dbReference type="Pfam" id="PF01405">
    <property type="entry name" value="PsbT"/>
    <property type="match status" value="1"/>
</dbReference>
<dbReference type="SUPFAM" id="SSF161029">
    <property type="entry name" value="Photosystem II reaction center protein T, PsbT"/>
    <property type="match status" value="1"/>
</dbReference>
<sequence>MEALVYTFLLVSTLGILFFSIFFREPPKVPTQK</sequence>
<protein>
    <recommendedName>
        <fullName evidence="1">Photosystem II reaction center protein T</fullName>
        <shortName evidence="1">PSII-T</shortName>
    </recommendedName>
</protein>
<comment type="function">
    <text evidence="1">Found at the monomer-monomer interface of the photosystem II (PS II) dimer, plays a role in assembly and dimerization of PSII. PSII is a light-driven water plastoquinone oxidoreductase, using light energy to abstract electrons from H(2)O, generating a proton gradient subsequently used for ATP formation.</text>
</comment>
<comment type="subunit">
    <text evidence="1">PSII is composed of 1 copy each of membrane proteins PsbA, PsbB, PsbC, PsbD, PsbE, PsbF, PsbH, PsbI, PsbJ, PsbK, PsbL, PsbM, PsbT, PsbY, PsbZ, Psb30/Ycf12, at least 3 peripheral proteins of the oxygen-evolving complex and a large number of cofactors. It forms dimeric complexes.</text>
</comment>
<comment type="subcellular location">
    <subcellularLocation>
        <location evidence="1">Plastid</location>
        <location evidence="1">Chloroplast thylakoid membrane</location>
        <topology evidence="1">Single-pass membrane protein</topology>
    </subcellularLocation>
</comment>
<comment type="similarity">
    <text evidence="1">Belongs to the PsbT family.</text>
</comment>
<feature type="chain" id="PRO_0000276306" description="Photosystem II reaction center protein T">
    <location>
        <begin position="1"/>
        <end position="33"/>
    </location>
</feature>
<feature type="transmembrane region" description="Helical" evidence="1">
    <location>
        <begin position="3"/>
        <end position="23"/>
    </location>
</feature>
<proteinExistence type="inferred from homology"/>